<accession>O43304</accession>
<protein>
    <recommendedName>
        <fullName>SEC14-like protein 5</fullName>
    </recommendedName>
</protein>
<proteinExistence type="evidence at protein level"/>
<feature type="chain" id="PRO_0000333865" description="SEC14-like protein 5">
    <location>
        <begin position="1"/>
        <end position="696"/>
    </location>
</feature>
<feature type="domain" description="PRELI/MSF1" evidence="3">
    <location>
        <begin position="2"/>
        <end position="175"/>
    </location>
</feature>
<feature type="domain" description="CRAL-TRIO" evidence="1">
    <location>
        <begin position="306"/>
        <end position="482"/>
    </location>
</feature>
<feature type="domain" description="GOLD" evidence="2">
    <location>
        <begin position="509"/>
        <end position="653"/>
    </location>
</feature>
<feature type="region of interest" description="Disordered" evidence="4">
    <location>
        <begin position="178"/>
        <end position="214"/>
    </location>
</feature>
<organism>
    <name type="scientific">Homo sapiens</name>
    <name type="common">Human</name>
    <dbReference type="NCBI Taxonomy" id="9606"/>
    <lineage>
        <taxon>Eukaryota</taxon>
        <taxon>Metazoa</taxon>
        <taxon>Chordata</taxon>
        <taxon>Craniata</taxon>
        <taxon>Vertebrata</taxon>
        <taxon>Euteleostomi</taxon>
        <taxon>Mammalia</taxon>
        <taxon>Eutheria</taxon>
        <taxon>Euarchontoglires</taxon>
        <taxon>Primates</taxon>
        <taxon>Haplorrhini</taxon>
        <taxon>Catarrhini</taxon>
        <taxon>Hominidae</taxon>
        <taxon>Homo</taxon>
    </lineage>
</organism>
<reference key="1">
    <citation type="journal article" date="1997" name="DNA Res.">
        <title>Prediction of the coding sequences of unidentified human genes. VIII. 78 new cDNA clones from brain which code for large proteins in vitro.</title>
        <authorList>
            <person name="Ishikawa K."/>
            <person name="Nagase T."/>
            <person name="Nakajima D."/>
            <person name="Seki N."/>
            <person name="Ohira M."/>
            <person name="Miyajima N."/>
            <person name="Tanaka A."/>
            <person name="Kotani H."/>
            <person name="Nomura N."/>
            <person name="Ohara O."/>
        </authorList>
    </citation>
    <scope>NUCLEOTIDE SEQUENCE [LARGE SCALE MRNA]</scope>
    <source>
        <tissue>Brain</tissue>
    </source>
</reference>
<reference key="2">
    <citation type="journal article" date="2002" name="DNA Res.">
        <title>Construction of expression-ready cDNA clones for KIAA genes: manual curation of 330 KIAA cDNA clones.</title>
        <authorList>
            <person name="Nakajima D."/>
            <person name="Okazaki N."/>
            <person name="Yamakawa H."/>
            <person name="Kikuno R."/>
            <person name="Ohara O."/>
            <person name="Nagase T."/>
        </authorList>
    </citation>
    <scope>SEQUENCE REVISION</scope>
</reference>
<name>S14L5_HUMAN</name>
<dbReference type="EMBL" id="AB007880">
    <property type="protein sequence ID" value="BAA24850.2"/>
    <property type="status" value="ALT_INIT"/>
    <property type="molecule type" value="mRNA"/>
</dbReference>
<dbReference type="CCDS" id="CCDS45403.1"/>
<dbReference type="RefSeq" id="NP_055507.1">
    <property type="nucleotide sequence ID" value="NM_014692.2"/>
</dbReference>
<dbReference type="RefSeq" id="XP_024306265.1">
    <property type="nucleotide sequence ID" value="XM_024450497.2"/>
</dbReference>
<dbReference type="RefSeq" id="XP_024306266.1">
    <property type="nucleotide sequence ID" value="XM_024450498.2"/>
</dbReference>
<dbReference type="RefSeq" id="XP_054170461.1">
    <property type="nucleotide sequence ID" value="XM_054314486.1"/>
</dbReference>
<dbReference type="RefSeq" id="XP_054170462.1">
    <property type="nucleotide sequence ID" value="XM_054314487.1"/>
</dbReference>
<dbReference type="SMR" id="O43304"/>
<dbReference type="BioGRID" id="115066">
    <property type="interactions" value="5"/>
</dbReference>
<dbReference type="FunCoup" id="O43304">
    <property type="interactions" value="617"/>
</dbReference>
<dbReference type="IntAct" id="O43304">
    <property type="interactions" value="1"/>
</dbReference>
<dbReference type="STRING" id="9606.ENSP00000251170"/>
<dbReference type="iPTMnet" id="O43304"/>
<dbReference type="PhosphoSitePlus" id="O43304"/>
<dbReference type="BioMuta" id="SEC14L5"/>
<dbReference type="jPOST" id="O43304"/>
<dbReference type="MassIVE" id="O43304"/>
<dbReference type="PaxDb" id="9606-ENSP00000251170"/>
<dbReference type="PeptideAtlas" id="O43304"/>
<dbReference type="ProteomicsDB" id="48879"/>
<dbReference type="Antibodypedia" id="51621">
    <property type="antibodies" value="62 antibodies from 11 providers"/>
</dbReference>
<dbReference type="DNASU" id="9717"/>
<dbReference type="Ensembl" id="ENST00000251170.12">
    <property type="protein sequence ID" value="ENSP00000251170.6"/>
    <property type="gene ID" value="ENSG00000103184.12"/>
</dbReference>
<dbReference type="GeneID" id="9717"/>
<dbReference type="KEGG" id="hsa:9717"/>
<dbReference type="MANE-Select" id="ENST00000251170.12">
    <property type="protein sequence ID" value="ENSP00000251170.6"/>
    <property type="RefSeq nucleotide sequence ID" value="NM_014692.2"/>
    <property type="RefSeq protein sequence ID" value="NP_055507.1"/>
</dbReference>
<dbReference type="UCSC" id="uc002cye.3">
    <property type="organism name" value="human"/>
</dbReference>
<dbReference type="AGR" id="HGNC:29032"/>
<dbReference type="CTD" id="9717"/>
<dbReference type="DisGeNET" id="9717"/>
<dbReference type="GeneCards" id="SEC14L5"/>
<dbReference type="HGNC" id="HGNC:29032">
    <property type="gene designation" value="SEC14L5"/>
</dbReference>
<dbReference type="HPA" id="ENSG00000103184">
    <property type="expression patterns" value="Group enriched (brain, tongue)"/>
</dbReference>
<dbReference type="MIM" id="619412">
    <property type="type" value="gene"/>
</dbReference>
<dbReference type="neXtProt" id="NX_O43304"/>
<dbReference type="OpenTargets" id="ENSG00000103184"/>
<dbReference type="PharmGKB" id="PA142670939"/>
<dbReference type="VEuPathDB" id="HostDB:ENSG00000103184"/>
<dbReference type="eggNOG" id="KOG1471">
    <property type="taxonomic scope" value="Eukaryota"/>
</dbReference>
<dbReference type="GeneTree" id="ENSGT00940000160832"/>
<dbReference type="HOGENOM" id="CLU_023840_0_0_1"/>
<dbReference type="InParanoid" id="O43304"/>
<dbReference type="OMA" id="YHTKQVP"/>
<dbReference type="OrthoDB" id="30289at2759"/>
<dbReference type="PAN-GO" id="O43304">
    <property type="GO annotations" value="1 GO annotation based on evolutionary models"/>
</dbReference>
<dbReference type="PhylomeDB" id="O43304"/>
<dbReference type="TreeFam" id="TF313988"/>
<dbReference type="PathwayCommons" id="O43304"/>
<dbReference type="SignaLink" id="O43304"/>
<dbReference type="BioGRID-ORCS" id="9717">
    <property type="hits" value="16 hits in 1149 CRISPR screens"/>
</dbReference>
<dbReference type="ChiTaRS" id="SEC14L5">
    <property type="organism name" value="human"/>
</dbReference>
<dbReference type="GenomeRNAi" id="9717"/>
<dbReference type="Pharos" id="O43304">
    <property type="development level" value="Tdark"/>
</dbReference>
<dbReference type="PRO" id="PR:O43304"/>
<dbReference type="Proteomes" id="UP000005640">
    <property type="component" value="Chromosome 16"/>
</dbReference>
<dbReference type="RNAct" id="O43304">
    <property type="molecule type" value="protein"/>
</dbReference>
<dbReference type="Bgee" id="ENSG00000103184">
    <property type="expression patterns" value="Expressed in inferior vagus X ganglion and 134 other cell types or tissues"/>
</dbReference>
<dbReference type="ExpressionAtlas" id="O43304">
    <property type="expression patterns" value="baseline and differential"/>
</dbReference>
<dbReference type="GO" id="GO:0005737">
    <property type="term" value="C:cytoplasm"/>
    <property type="evidence" value="ECO:0000318"/>
    <property type="project" value="GO_Central"/>
</dbReference>
<dbReference type="CDD" id="cd00170">
    <property type="entry name" value="SEC14"/>
    <property type="match status" value="1"/>
</dbReference>
<dbReference type="FunFam" id="3.40.525.10:FF:000006">
    <property type="entry name" value="SEC14-like lipid binding 1"/>
    <property type="match status" value="1"/>
</dbReference>
<dbReference type="Gene3D" id="3.40.525.10">
    <property type="entry name" value="CRAL-TRIO lipid binding domain"/>
    <property type="match status" value="1"/>
</dbReference>
<dbReference type="Gene3D" id="2.60.120.680">
    <property type="entry name" value="GOLD domain"/>
    <property type="match status" value="1"/>
</dbReference>
<dbReference type="InterPro" id="IPR001251">
    <property type="entry name" value="CRAL-TRIO_dom"/>
</dbReference>
<dbReference type="InterPro" id="IPR036865">
    <property type="entry name" value="CRAL-TRIO_dom_sf"/>
</dbReference>
<dbReference type="InterPro" id="IPR011074">
    <property type="entry name" value="CRAL/TRIO_N_dom"/>
</dbReference>
<dbReference type="InterPro" id="IPR036273">
    <property type="entry name" value="CRAL/TRIO_N_dom_sf"/>
</dbReference>
<dbReference type="InterPro" id="IPR009038">
    <property type="entry name" value="GOLD_dom"/>
</dbReference>
<dbReference type="InterPro" id="IPR036598">
    <property type="entry name" value="GOLD_dom_sf"/>
</dbReference>
<dbReference type="InterPro" id="IPR006797">
    <property type="entry name" value="PRELI/MSF1_dom"/>
</dbReference>
<dbReference type="InterPro" id="IPR051064">
    <property type="entry name" value="SEC14/CRAL-TRIO_domain"/>
</dbReference>
<dbReference type="PANTHER" id="PTHR23324">
    <property type="entry name" value="SEC14 RELATED PROTEIN"/>
    <property type="match status" value="1"/>
</dbReference>
<dbReference type="PANTHER" id="PTHR23324:SF39">
    <property type="entry name" value="SEC14-LIKE PROTEIN 5"/>
    <property type="match status" value="1"/>
</dbReference>
<dbReference type="Pfam" id="PF00650">
    <property type="entry name" value="CRAL_TRIO"/>
    <property type="match status" value="1"/>
</dbReference>
<dbReference type="Pfam" id="PF03765">
    <property type="entry name" value="CRAL_TRIO_N"/>
    <property type="match status" value="1"/>
</dbReference>
<dbReference type="Pfam" id="PF04707">
    <property type="entry name" value="PRELI"/>
    <property type="match status" value="1"/>
</dbReference>
<dbReference type="PRINTS" id="PR00180">
    <property type="entry name" value="CRETINALDHBP"/>
</dbReference>
<dbReference type="SMART" id="SM01100">
    <property type="entry name" value="CRAL_TRIO_N"/>
    <property type="match status" value="1"/>
</dbReference>
<dbReference type="SMART" id="SM00516">
    <property type="entry name" value="SEC14"/>
    <property type="match status" value="1"/>
</dbReference>
<dbReference type="SUPFAM" id="SSF52087">
    <property type="entry name" value="CRAL/TRIO domain"/>
    <property type="match status" value="1"/>
</dbReference>
<dbReference type="SUPFAM" id="SSF46938">
    <property type="entry name" value="CRAL/TRIO N-terminal domain"/>
    <property type="match status" value="1"/>
</dbReference>
<dbReference type="SUPFAM" id="SSF101576">
    <property type="entry name" value="Supernatant protein factor (SPF), C-terminal domain"/>
    <property type="match status" value="1"/>
</dbReference>
<dbReference type="PROSITE" id="PS50191">
    <property type="entry name" value="CRAL_TRIO"/>
    <property type="match status" value="1"/>
</dbReference>
<dbReference type="PROSITE" id="PS50866">
    <property type="entry name" value="GOLD"/>
    <property type="match status" value="1"/>
</dbReference>
<dbReference type="PROSITE" id="PS50904">
    <property type="entry name" value="PRELI_MSF1"/>
    <property type="match status" value="1"/>
</dbReference>
<sequence length="696" mass="78942">MVQRYQSPVRVYKYPFELVMAAYEKRFPTCPQIPVFLGSEVLRESRSPDGAVHVVERSCRLRVDAPRLLRKIAGVEHVVFVQTNILNWKERTLLIEAHNETFANRVVVNEHCSYTVHPENEDWTCFEQSASLDIRSFFGFENALEKIAMKQYTANVKRGKEVIEHYLNELISQGTSHIPRWTPAPVREEDARNQAGPRDPSSLEAHGPRSTLGPALEAVSMDGDKLDADYIERCLGHLTPMQESCLIQLRHWLQETHKGKIPKDEHILRFLRAHDFHLDKAREMLRQSLSWRKQHQVDLLLQTWQPPALLEEFYAGGWHYQDIDGRPLYILRLGQMDTKGLMKAVGEEALLRHVLSVNEEGQKRCEGSTRQLGRPISSWTCLLDLEGLNMRHLWRPGVKALLRMIEVVEDNYPETLGRLLIVRAPRVFPVLWTLISPFINENTRRKFLIYSGSNYQGPGGLVDYLDREVIPDFLGGESVCNVPEGGLVPKSLYMTEEEQEHTDQLWQWSETYHSASVLRGAPHEVAVEILEGESVITWDFDILRGDVVFSLYHTKQAPRLGAREPGTRASGQLIDKGWVLGRDYSRVEAPLVCREGESIQGSHVTRWPGVYLLQWQMHSPPSSVACSLPGVDDVLTALHSPGPKCKLLYYCEVLASEDFRGSMSSLESCTSGFSQLSAATSSSSSGQSHSSSLVSR</sequence>
<gene>
    <name type="primary">SEC14L5</name>
    <name type="synonym">KIAA0420</name>
</gene>
<evidence type="ECO:0000255" key="1">
    <source>
        <dbReference type="PROSITE-ProRule" id="PRU00056"/>
    </source>
</evidence>
<evidence type="ECO:0000255" key="2">
    <source>
        <dbReference type="PROSITE-ProRule" id="PRU00096"/>
    </source>
</evidence>
<evidence type="ECO:0000255" key="3">
    <source>
        <dbReference type="PROSITE-ProRule" id="PRU00158"/>
    </source>
</evidence>
<evidence type="ECO:0000256" key="4">
    <source>
        <dbReference type="SAM" id="MobiDB-lite"/>
    </source>
</evidence>
<evidence type="ECO:0000305" key="5"/>
<comment type="interaction">
    <interactant intactId="EBI-12224055">
        <id>O43304</id>
    </interactant>
    <interactant intactId="EBI-357669">
        <id>P62333</id>
        <label>PSMC6</label>
    </interactant>
    <organismsDiffer>false</organismsDiffer>
    <experiments>3</experiments>
</comment>
<comment type="sequence caution" evidence="5">
    <conflict type="erroneous initiation">
        <sequence resource="EMBL-CDS" id="BAA24850"/>
    </conflict>
</comment>
<keyword id="KW-1267">Proteomics identification</keyword>
<keyword id="KW-1185">Reference proteome</keyword>